<evidence type="ECO:0000255" key="1">
    <source>
        <dbReference type="HAMAP-Rule" id="MF_00337"/>
    </source>
</evidence>
<evidence type="ECO:0000305" key="2"/>
<gene>
    <name evidence="1" type="primary">xseB</name>
    <name type="ordered locus">VC_0891</name>
</gene>
<accession>Q9KTL1</accession>
<name>EX7S_VIBCH</name>
<feature type="chain" id="PRO_0000207028" description="Exodeoxyribonuclease 7 small subunit">
    <location>
        <begin position="1"/>
        <end position="80"/>
    </location>
</feature>
<proteinExistence type="inferred from homology"/>
<dbReference type="EC" id="3.1.11.6" evidence="1"/>
<dbReference type="EMBL" id="AE003852">
    <property type="protein sequence ID" value="AAF94053.1"/>
    <property type="molecule type" value="Genomic_DNA"/>
</dbReference>
<dbReference type="PIR" id="B82267">
    <property type="entry name" value="B82267"/>
</dbReference>
<dbReference type="RefSeq" id="NP_230538.1">
    <property type="nucleotide sequence ID" value="NC_002505.1"/>
</dbReference>
<dbReference type="RefSeq" id="WP_000157114.1">
    <property type="nucleotide sequence ID" value="NZ_LT906614.1"/>
</dbReference>
<dbReference type="SMR" id="Q9KTL1"/>
<dbReference type="STRING" id="243277.VC_0891"/>
<dbReference type="DNASU" id="2614120"/>
<dbReference type="EnsemblBacteria" id="AAF94053">
    <property type="protein sequence ID" value="AAF94053"/>
    <property type="gene ID" value="VC_0891"/>
</dbReference>
<dbReference type="GeneID" id="88784921"/>
<dbReference type="KEGG" id="vch:VC_0891"/>
<dbReference type="PATRIC" id="fig|243277.26.peg.848"/>
<dbReference type="eggNOG" id="COG1722">
    <property type="taxonomic scope" value="Bacteria"/>
</dbReference>
<dbReference type="HOGENOM" id="CLU_145918_3_3_6"/>
<dbReference type="Proteomes" id="UP000000584">
    <property type="component" value="Chromosome 1"/>
</dbReference>
<dbReference type="GO" id="GO:0005829">
    <property type="term" value="C:cytosol"/>
    <property type="evidence" value="ECO:0000318"/>
    <property type="project" value="GO_Central"/>
</dbReference>
<dbReference type="GO" id="GO:0009318">
    <property type="term" value="C:exodeoxyribonuclease VII complex"/>
    <property type="evidence" value="ECO:0007669"/>
    <property type="project" value="InterPro"/>
</dbReference>
<dbReference type="GO" id="GO:0008855">
    <property type="term" value="F:exodeoxyribonuclease VII activity"/>
    <property type="evidence" value="ECO:0000318"/>
    <property type="project" value="GO_Central"/>
</dbReference>
<dbReference type="GO" id="GO:0006308">
    <property type="term" value="P:DNA catabolic process"/>
    <property type="evidence" value="ECO:0007669"/>
    <property type="project" value="UniProtKB-UniRule"/>
</dbReference>
<dbReference type="FunFam" id="1.10.287.1040:FF:000001">
    <property type="entry name" value="Exodeoxyribonuclease 7 small subunit"/>
    <property type="match status" value="1"/>
</dbReference>
<dbReference type="Gene3D" id="1.10.287.1040">
    <property type="entry name" value="Exonuclease VII, small subunit"/>
    <property type="match status" value="1"/>
</dbReference>
<dbReference type="HAMAP" id="MF_00337">
    <property type="entry name" value="Exonuc_7_S"/>
    <property type="match status" value="1"/>
</dbReference>
<dbReference type="InterPro" id="IPR003761">
    <property type="entry name" value="Exonuc_VII_S"/>
</dbReference>
<dbReference type="InterPro" id="IPR037004">
    <property type="entry name" value="Exonuc_VII_ssu_sf"/>
</dbReference>
<dbReference type="NCBIfam" id="NF002137">
    <property type="entry name" value="PRK00977.1-1"/>
    <property type="match status" value="1"/>
</dbReference>
<dbReference type="NCBIfam" id="NF002140">
    <property type="entry name" value="PRK00977.1-4"/>
    <property type="match status" value="1"/>
</dbReference>
<dbReference type="NCBIfam" id="TIGR01280">
    <property type="entry name" value="xseB"/>
    <property type="match status" value="1"/>
</dbReference>
<dbReference type="PANTHER" id="PTHR34137">
    <property type="entry name" value="EXODEOXYRIBONUCLEASE 7 SMALL SUBUNIT"/>
    <property type="match status" value="1"/>
</dbReference>
<dbReference type="PANTHER" id="PTHR34137:SF1">
    <property type="entry name" value="EXODEOXYRIBONUCLEASE 7 SMALL SUBUNIT"/>
    <property type="match status" value="1"/>
</dbReference>
<dbReference type="Pfam" id="PF02609">
    <property type="entry name" value="Exonuc_VII_S"/>
    <property type="match status" value="1"/>
</dbReference>
<dbReference type="PIRSF" id="PIRSF006488">
    <property type="entry name" value="Exonuc_VII_S"/>
    <property type="match status" value="1"/>
</dbReference>
<dbReference type="SUPFAM" id="SSF116842">
    <property type="entry name" value="XseB-like"/>
    <property type="match status" value="1"/>
</dbReference>
<keyword id="KW-0963">Cytoplasm</keyword>
<keyword id="KW-0269">Exonuclease</keyword>
<keyword id="KW-0378">Hydrolase</keyword>
<keyword id="KW-0540">Nuclease</keyword>
<keyword id="KW-1185">Reference proteome</keyword>
<reference key="1">
    <citation type="journal article" date="2000" name="Nature">
        <title>DNA sequence of both chromosomes of the cholera pathogen Vibrio cholerae.</title>
        <authorList>
            <person name="Heidelberg J.F."/>
            <person name="Eisen J.A."/>
            <person name="Nelson W.C."/>
            <person name="Clayton R.A."/>
            <person name="Gwinn M.L."/>
            <person name="Dodson R.J."/>
            <person name="Haft D.H."/>
            <person name="Hickey E.K."/>
            <person name="Peterson J.D."/>
            <person name="Umayam L.A."/>
            <person name="Gill S.R."/>
            <person name="Nelson K.E."/>
            <person name="Read T.D."/>
            <person name="Tettelin H."/>
            <person name="Richardson D.L."/>
            <person name="Ermolaeva M.D."/>
            <person name="Vamathevan J.J."/>
            <person name="Bass S."/>
            <person name="Qin H."/>
            <person name="Dragoi I."/>
            <person name="Sellers P."/>
            <person name="McDonald L.A."/>
            <person name="Utterback T.R."/>
            <person name="Fleischmann R.D."/>
            <person name="Nierman W.C."/>
            <person name="White O."/>
            <person name="Salzberg S.L."/>
            <person name="Smith H.O."/>
            <person name="Colwell R.R."/>
            <person name="Mekalanos J.J."/>
            <person name="Venter J.C."/>
            <person name="Fraser C.M."/>
        </authorList>
    </citation>
    <scope>NUCLEOTIDE SEQUENCE [LARGE SCALE GENOMIC DNA]</scope>
    <source>
        <strain>ATCC 39315 / El Tor Inaba N16961</strain>
    </source>
</reference>
<sequence length="80" mass="8911">MASKKPENMSFESTIEELEQLVEQLESGDLALDEALRKFERGISLARAGQLKLDDAEQRVRILLSNSDDAPLSDFSDVAE</sequence>
<protein>
    <recommendedName>
        <fullName evidence="1">Exodeoxyribonuclease 7 small subunit</fullName>
        <ecNumber evidence="1">3.1.11.6</ecNumber>
    </recommendedName>
    <alternativeName>
        <fullName evidence="1">Exodeoxyribonuclease VII small subunit</fullName>
        <shortName evidence="1">Exonuclease VII small subunit</shortName>
    </alternativeName>
</protein>
<comment type="function">
    <text evidence="1">Bidirectionally degrades single-stranded DNA into large acid-insoluble oligonucleotides, which are then degraded further into small acid-soluble oligonucleotides.</text>
</comment>
<comment type="catalytic activity">
    <reaction evidence="1">
        <text>Exonucleolytic cleavage in either 5'- to 3'- or 3'- to 5'-direction to yield nucleoside 5'-phosphates.</text>
        <dbReference type="EC" id="3.1.11.6"/>
    </reaction>
</comment>
<comment type="subunit">
    <text evidence="1">Heterooligomer composed of large and small subunits.</text>
</comment>
<comment type="subcellular location">
    <subcellularLocation>
        <location evidence="1">Cytoplasm</location>
    </subcellularLocation>
</comment>
<comment type="similarity">
    <text evidence="1 2">Belongs to the XseB family.</text>
</comment>
<organism>
    <name type="scientific">Vibrio cholerae serotype O1 (strain ATCC 39315 / El Tor Inaba N16961)</name>
    <dbReference type="NCBI Taxonomy" id="243277"/>
    <lineage>
        <taxon>Bacteria</taxon>
        <taxon>Pseudomonadati</taxon>
        <taxon>Pseudomonadota</taxon>
        <taxon>Gammaproteobacteria</taxon>
        <taxon>Vibrionales</taxon>
        <taxon>Vibrionaceae</taxon>
        <taxon>Vibrio</taxon>
    </lineage>
</organism>